<sequence>MPDITIALSKGRIFEDTIPFLKAAGIVPSDDPDTSRKLIIGTNRPDVRLVMVRATDVPTYVQYGAADLGVAGKDVLLEHDGIGLYQPLDLKIARCRMMVAVRDDYDYASAVFRGARLRVATKYVKTARNHFAAKGMHVDLIKLYGSMELAPLVDLADAIVDLVSTGSTLKANHLQAIEEIMPISARLIVNQAALKLKNTAIQPLLETFSAAVPKNL</sequence>
<comment type="function">
    <text evidence="1">Catalyzes the condensation of ATP and 5-phosphoribose 1-diphosphate to form N'-(5'-phosphoribosyl)-ATP (PR-ATP). Has a crucial role in the pathway because the rate of histidine biosynthesis seems to be controlled primarily by regulation of HisG enzymatic activity.</text>
</comment>
<comment type="catalytic activity">
    <reaction evidence="1">
        <text>1-(5-phospho-beta-D-ribosyl)-ATP + diphosphate = 5-phospho-alpha-D-ribose 1-diphosphate + ATP</text>
        <dbReference type="Rhea" id="RHEA:18473"/>
        <dbReference type="ChEBI" id="CHEBI:30616"/>
        <dbReference type="ChEBI" id="CHEBI:33019"/>
        <dbReference type="ChEBI" id="CHEBI:58017"/>
        <dbReference type="ChEBI" id="CHEBI:73183"/>
        <dbReference type="EC" id="2.4.2.17"/>
    </reaction>
</comment>
<comment type="pathway">
    <text evidence="1">Amino-acid biosynthesis; L-histidine biosynthesis; L-histidine from 5-phospho-alpha-D-ribose 1-diphosphate: step 1/9.</text>
</comment>
<comment type="subunit">
    <text evidence="1">Heteromultimer composed of HisG and HisZ subunits.</text>
</comment>
<comment type="subcellular location">
    <subcellularLocation>
        <location evidence="1">Cytoplasm</location>
    </subcellularLocation>
</comment>
<comment type="domain">
    <text>Lacks the C-terminal regulatory region which is replaced by HisZ.</text>
</comment>
<comment type="similarity">
    <text evidence="1">Belongs to the ATP phosphoribosyltransferase family. Short subfamily.</text>
</comment>
<reference key="1">
    <citation type="journal article" date="2003" name="J. Bacteriol.">
        <title>Complete genome sequence of the ammonia-oxidizing bacterium and obligate chemolithoautotroph Nitrosomonas europaea.</title>
        <authorList>
            <person name="Chain P."/>
            <person name="Lamerdin J.E."/>
            <person name="Larimer F.W."/>
            <person name="Regala W."/>
            <person name="Lao V."/>
            <person name="Land M.L."/>
            <person name="Hauser L."/>
            <person name="Hooper A.B."/>
            <person name="Klotz M.G."/>
            <person name="Norton J."/>
            <person name="Sayavedra-Soto L.A."/>
            <person name="Arciero D.M."/>
            <person name="Hommes N.G."/>
            <person name="Whittaker M.M."/>
            <person name="Arp D.J."/>
        </authorList>
    </citation>
    <scope>NUCLEOTIDE SEQUENCE [LARGE SCALE GENOMIC DNA]</scope>
    <source>
        <strain>ATCC 19718 / CIP 103999 / KCTC 2705 / NBRC 14298</strain>
    </source>
</reference>
<dbReference type="EC" id="2.4.2.17" evidence="1"/>
<dbReference type="EMBL" id="AL954747">
    <property type="protein sequence ID" value="CAD84782.1"/>
    <property type="molecule type" value="Genomic_DNA"/>
</dbReference>
<dbReference type="RefSeq" id="WP_011111482.1">
    <property type="nucleotide sequence ID" value="NC_004757.1"/>
</dbReference>
<dbReference type="SMR" id="Q82W27"/>
<dbReference type="STRING" id="228410.NE0871"/>
<dbReference type="GeneID" id="87104062"/>
<dbReference type="KEGG" id="neu:NE0871"/>
<dbReference type="eggNOG" id="COG0040">
    <property type="taxonomic scope" value="Bacteria"/>
</dbReference>
<dbReference type="HOGENOM" id="CLU_038115_2_0_4"/>
<dbReference type="OrthoDB" id="9801867at2"/>
<dbReference type="PhylomeDB" id="Q82W27"/>
<dbReference type="UniPathway" id="UPA00031">
    <property type="reaction ID" value="UER00006"/>
</dbReference>
<dbReference type="Proteomes" id="UP000001416">
    <property type="component" value="Chromosome"/>
</dbReference>
<dbReference type="GO" id="GO:0005737">
    <property type="term" value="C:cytoplasm"/>
    <property type="evidence" value="ECO:0007669"/>
    <property type="project" value="UniProtKB-SubCell"/>
</dbReference>
<dbReference type="GO" id="GO:0005524">
    <property type="term" value="F:ATP binding"/>
    <property type="evidence" value="ECO:0007669"/>
    <property type="project" value="UniProtKB-KW"/>
</dbReference>
<dbReference type="GO" id="GO:0003879">
    <property type="term" value="F:ATP phosphoribosyltransferase activity"/>
    <property type="evidence" value="ECO:0007669"/>
    <property type="project" value="UniProtKB-UniRule"/>
</dbReference>
<dbReference type="GO" id="GO:0000105">
    <property type="term" value="P:L-histidine biosynthetic process"/>
    <property type="evidence" value="ECO:0007669"/>
    <property type="project" value="UniProtKB-UniRule"/>
</dbReference>
<dbReference type="CDD" id="cd13595">
    <property type="entry name" value="PBP2_HisGs"/>
    <property type="match status" value="1"/>
</dbReference>
<dbReference type="FunFam" id="3.40.190.10:FF:000011">
    <property type="entry name" value="ATP phosphoribosyltransferase"/>
    <property type="match status" value="1"/>
</dbReference>
<dbReference type="Gene3D" id="3.40.190.10">
    <property type="entry name" value="Periplasmic binding protein-like II"/>
    <property type="match status" value="2"/>
</dbReference>
<dbReference type="HAMAP" id="MF_01018">
    <property type="entry name" value="HisG_Short"/>
    <property type="match status" value="1"/>
</dbReference>
<dbReference type="InterPro" id="IPR013820">
    <property type="entry name" value="ATP_PRibTrfase_cat"/>
</dbReference>
<dbReference type="InterPro" id="IPR018198">
    <property type="entry name" value="ATP_PRibTrfase_CS"/>
</dbReference>
<dbReference type="InterPro" id="IPR001348">
    <property type="entry name" value="ATP_PRibTrfase_HisG"/>
</dbReference>
<dbReference type="InterPro" id="IPR024893">
    <property type="entry name" value="ATP_PRibTrfase_HisG_short"/>
</dbReference>
<dbReference type="NCBIfam" id="TIGR00070">
    <property type="entry name" value="hisG"/>
    <property type="match status" value="1"/>
</dbReference>
<dbReference type="PANTHER" id="PTHR21403:SF8">
    <property type="entry name" value="ATP PHOSPHORIBOSYLTRANSFERASE"/>
    <property type="match status" value="1"/>
</dbReference>
<dbReference type="PANTHER" id="PTHR21403">
    <property type="entry name" value="ATP PHOSPHORIBOSYLTRANSFERASE ATP-PRTASE"/>
    <property type="match status" value="1"/>
</dbReference>
<dbReference type="Pfam" id="PF01634">
    <property type="entry name" value="HisG"/>
    <property type="match status" value="1"/>
</dbReference>
<dbReference type="SUPFAM" id="SSF53850">
    <property type="entry name" value="Periplasmic binding protein-like II"/>
    <property type="match status" value="1"/>
</dbReference>
<dbReference type="PROSITE" id="PS01316">
    <property type="entry name" value="ATP_P_PHORIBOSYLTR"/>
    <property type="match status" value="1"/>
</dbReference>
<proteinExistence type="inferred from homology"/>
<gene>
    <name evidence="1" type="primary">hisG</name>
    <name type="ordered locus">NE0871</name>
</gene>
<accession>Q82W27</accession>
<organism>
    <name type="scientific">Nitrosomonas europaea (strain ATCC 19718 / CIP 103999 / KCTC 2705 / NBRC 14298)</name>
    <dbReference type="NCBI Taxonomy" id="228410"/>
    <lineage>
        <taxon>Bacteria</taxon>
        <taxon>Pseudomonadati</taxon>
        <taxon>Pseudomonadota</taxon>
        <taxon>Betaproteobacteria</taxon>
        <taxon>Nitrosomonadales</taxon>
        <taxon>Nitrosomonadaceae</taxon>
        <taxon>Nitrosomonas</taxon>
    </lineage>
</organism>
<name>HIS1_NITEU</name>
<protein>
    <recommendedName>
        <fullName evidence="1">ATP phosphoribosyltransferase</fullName>
        <shortName evidence="1">ATP-PRT</shortName>
        <shortName evidence="1">ATP-PRTase</shortName>
        <ecNumber evidence="1">2.4.2.17</ecNumber>
    </recommendedName>
</protein>
<feature type="chain" id="PRO_0000151920" description="ATP phosphoribosyltransferase">
    <location>
        <begin position="1"/>
        <end position="216"/>
    </location>
</feature>
<keyword id="KW-0028">Amino-acid biosynthesis</keyword>
<keyword id="KW-0067">ATP-binding</keyword>
<keyword id="KW-0963">Cytoplasm</keyword>
<keyword id="KW-0328">Glycosyltransferase</keyword>
<keyword id="KW-0368">Histidine biosynthesis</keyword>
<keyword id="KW-0547">Nucleotide-binding</keyword>
<keyword id="KW-1185">Reference proteome</keyword>
<keyword id="KW-0808">Transferase</keyword>
<evidence type="ECO:0000255" key="1">
    <source>
        <dbReference type="HAMAP-Rule" id="MF_01018"/>
    </source>
</evidence>